<keyword id="KW-0004">4Fe-4S</keyword>
<keyword id="KW-0249">Electron transport</keyword>
<keyword id="KW-0408">Iron</keyword>
<keyword id="KW-0411">Iron-sulfur</keyword>
<keyword id="KW-0472">Membrane</keyword>
<keyword id="KW-0479">Metal-binding</keyword>
<keyword id="KW-0560">Oxidoreductase</keyword>
<keyword id="KW-0602">Photosynthesis</keyword>
<keyword id="KW-0603">Photosystem I</keyword>
<keyword id="KW-0677">Repeat</keyword>
<keyword id="KW-0793">Thylakoid</keyword>
<keyword id="KW-0813">Transport</keyword>
<proteinExistence type="inferred from homology"/>
<comment type="function">
    <text evidence="2">Apoprotein for the two 4Fe-4S centers FA and FB of photosystem I (PSI); essential for photochemical activity. FB is the terminal electron acceptor of PSI, donating electrons to ferredoxin. The C-terminus interacts with PsaA/B/D and helps assemble the protein into the PSI complex. Required for binding of PsaD and PsaE to PSI. PSI is a plastocyanin/cytochrome c6-ferredoxin oxidoreductase, converting photonic excitation into a charge separation, which transfers an electron from the donor P700 chlorophyll pair to the spectroscopically characterized acceptors A0, A1, FX, FA and FB in turn.</text>
</comment>
<comment type="catalytic activity">
    <reaction evidence="2">
        <text>reduced [plastocyanin] + hnu + oxidized [2Fe-2S]-[ferredoxin] = oxidized [plastocyanin] + reduced [2Fe-2S]-[ferredoxin]</text>
        <dbReference type="Rhea" id="RHEA:30407"/>
        <dbReference type="Rhea" id="RHEA-COMP:10000"/>
        <dbReference type="Rhea" id="RHEA-COMP:10001"/>
        <dbReference type="Rhea" id="RHEA-COMP:10039"/>
        <dbReference type="Rhea" id="RHEA-COMP:10040"/>
        <dbReference type="ChEBI" id="CHEBI:29036"/>
        <dbReference type="ChEBI" id="CHEBI:30212"/>
        <dbReference type="ChEBI" id="CHEBI:33737"/>
        <dbReference type="ChEBI" id="CHEBI:33738"/>
        <dbReference type="ChEBI" id="CHEBI:49552"/>
        <dbReference type="EC" id="1.97.1.12"/>
    </reaction>
</comment>
<comment type="cofactor">
    <cofactor evidence="2">
        <name>[4Fe-4S] cluster</name>
        <dbReference type="ChEBI" id="CHEBI:49883"/>
    </cofactor>
    <text evidence="2">Binds 2 [4Fe-4S] clusters. Cluster 2 is most probably the spectroscopically characterized electron acceptor FA and cluster 1 is most probably FB.</text>
</comment>
<comment type="subunit">
    <text evidence="2">The cyanobacterial PSI reaction center is composed of one copy each of PsaA,B,C,D,E,F,I,J,K,L,M and X, and forms trimeric complexes.</text>
</comment>
<comment type="subcellular location">
    <subcellularLocation>
        <location evidence="2">Cellular thylakoid membrane</location>
        <topology evidence="2">Peripheral membrane protein</topology>
        <orientation evidence="2">Cytoplasmic side</orientation>
    </subcellularLocation>
</comment>
<comment type="sequence caution" evidence="3">
    <conflict type="erroneous initiation">
        <sequence resource="EMBL-CDS" id="ABB33903"/>
    </conflict>
</comment>
<reference key="1">
    <citation type="submission" date="2005-07" db="EMBL/GenBank/DDBJ databases">
        <title>Complete sequence of Synechococcus sp. CC9605.</title>
        <authorList>
            <consortium name="US DOE Joint Genome Institute"/>
            <person name="Copeland A."/>
            <person name="Lucas S."/>
            <person name="Lapidus A."/>
            <person name="Barry K."/>
            <person name="Detter J.C."/>
            <person name="Glavina T."/>
            <person name="Hammon N."/>
            <person name="Israni S."/>
            <person name="Pitluck S."/>
            <person name="Schmutz J."/>
            <person name="Martinez M."/>
            <person name="Larimer F."/>
            <person name="Land M."/>
            <person name="Kyrpides N."/>
            <person name="Ivanova N."/>
            <person name="Richardson P."/>
        </authorList>
    </citation>
    <scope>NUCLEOTIDE SEQUENCE [LARGE SCALE GENOMIC DNA]</scope>
    <source>
        <strain>CC9605</strain>
    </source>
</reference>
<protein>
    <recommendedName>
        <fullName evidence="2">Photosystem I iron-sulfur center</fullName>
        <ecNumber evidence="2">1.97.1.12</ecNumber>
    </recommendedName>
    <alternativeName>
        <fullName evidence="2">9 kDa polypeptide</fullName>
    </alternativeName>
    <alternativeName>
        <fullName evidence="2">PSI-C</fullName>
    </alternativeName>
    <alternativeName>
        <fullName evidence="2">Photosystem I subunit VII</fullName>
    </alternativeName>
    <alternativeName>
        <fullName evidence="2">PsaC</fullName>
    </alternativeName>
</protein>
<feature type="initiator methionine" description="Removed" evidence="1">
    <location>
        <position position="1"/>
    </location>
</feature>
<feature type="chain" id="PRO_0000292132" description="Photosystem I iron-sulfur center">
    <location>
        <begin position="2"/>
        <end position="81"/>
    </location>
</feature>
<feature type="domain" description="4Fe-4S ferredoxin-type 1" evidence="2">
    <location>
        <begin position="2"/>
        <end position="31"/>
    </location>
</feature>
<feature type="domain" description="4Fe-4S ferredoxin-type 2" evidence="2">
    <location>
        <begin position="37"/>
        <end position="68"/>
    </location>
</feature>
<feature type="binding site" evidence="2">
    <location>
        <position position="11"/>
    </location>
    <ligand>
        <name>[4Fe-4S] cluster</name>
        <dbReference type="ChEBI" id="CHEBI:49883"/>
        <label>1</label>
    </ligand>
</feature>
<feature type="binding site" evidence="2">
    <location>
        <position position="14"/>
    </location>
    <ligand>
        <name>[4Fe-4S] cluster</name>
        <dbReference type="ChEBI" id="CHEBI:49883"/>
        <label>1</label>
    </ligand>
</feature>
<feature type="binding site" evidence="2">
    <location>
        <position position="17"/>
    </location>
    <ligand>
        <name>[4Fe-4S] cluster</name>
        <dbReference type="ChEBI" id="CHEBI:49883"/>
        <label>1</label>
    </ligand>
</feature>
<feature type="binding site" evidence="2">
    <location>
        <position position="21"/>
    </location>
    <ligand>
        <name>[4Fe-4S] cluster</name>
        <dbReference type="ChEBI" id="CHEBI:49883"/>
        <label>2</label>
    </ligand>
</feature>
<feature type="binding site" evidence="2">
    <location>
        <position position="48"/>
    </location>
    <ligand>
        <name>[4Fe-4S] cluster</name>
        <dbReference type="ChEBI" id="CHEBI:49883"/>
        <label>2</label>
    </ligand>
</feature>
<feature type="binding site" evidence="2">
    <location>
        <position position="51"/>
    </location>
    <ligand>
        <name>[4Fe-4S] cluster</name>
        <dbReference type="ChEBI" id="CHEBI:49883"/>
        <label>2</label>
    </ligand>
</feature>
<feature type="binding site" evidence="2">
    <location>
        <position position="54"/>
    </location>
    <ligand>
        <name>[4Fe-4S] cluster</name>
        <dbReference type="ChEBI" id="CHEBI:49883"/>
        <label>2</label>
    </ligand>
</feature>
<feature type="binding site" evidence="2">
    <location>
        <position position="58"/>
    </location>
    <ligand>
        <name>[4Fe-4S] cluster</name>
        <dbReference type="ChEBI" id="CHEBI:49883"/>
        <label>1</label>
    </ligand>
</feature>
<evidence type="ECO:0000250" key="1"/>
<evidence type="ECO:0000255" key="2">
    <source>
        <dbReference type="HAMAP-Rule" id="MF_01303"/>
    </source>
</evidence>
<evidence type="ECO:0000305" key="3"/>
<gene>
    <name evidence="2" type="primary">psaC</name>
    <name type="ordered locus">Syncc9605_0127</name>
</gene>
<name>PSAC_SYNSC</name>
<dbReference type="EC" id="1.97.1.12" evidence="2"/>
<dbReference type="EMBL" id="CP000110">
    <property type="protein sequence ID" value="ABB33903.1"/>
    <property type="status" value="ALT_INIT"/>
    <property type="molecule type" value="Genomic_DNA"/>
</dbReference>
<dbReference type="RefSeq" id="WP_006850103.1">
    <property type="nucleotide sequence ID" value="NC_007516.1"/>
</dbReference>
<dbReference type="SMR" id="Q3ANC9"/>
<dbReference type="STRING" id="110662.Syncc9605_0127"/>
<dbReference type="KEGG" id="syd:Syncc9605_0127"/>
<dbReference type="eggNOG" id="COG1143">
    <property type="taxonomic scope" value="Bacteria"/>
</dbReference>
<dbReference type="HOGENOM" id="CLU_139698_8_0_3"/>
<dbReference type="OrthoDB" id="9804603at2"/>
<dbReference type="GO" id="GO:0009522">
    <property type="term" value="C:photosystem I"/>
    <property type="evidence" value="ECO:0007669"/>
    <property type="project" value="UniProtKB-KW"/>
</dbReference>
<dbReference type="GO" id="GO:0031676">
    <property type="term" value="C:plasma membrane-derived thylakoid membrane"/>
    <property type="evidence" value="ECO:0007669"/>
    <property type="project" value="UniProtKB-SubCell"/>
</dbReference>
<dbReference type="GO" id="GO:0051539">
    <property type="term" value="F:4 iron, 4 sulfur cluster binding"/>
    <property type="evidence" value="ECO:0007669"/>
    <property type="project" value="UniProtKB-KW"/>
</dbReference>
<dbReference type="GO" id="GO:0009055">
    <property type="term" value="F:electron transfer activity"/>
    <property type="evidence" value="ECO:0007669"/>
    <property type="project" value="UniProtKB-UniRule"/>
</dbReference>
<dbReference type="GO" id="GO:0046872">
    <property type="term" value="F:metal ion binding"/>
    <property type="evidence" value="ECO:0007669"/>
    <property type="project" value="UniProtKB-KW"/>
</dbReference>
<dbReference type="GO" id="GO:0016491">
    <property type="term" value="F:oxidoreductase activity"/>
    <property type="evidence" value="ECO:0007669"/>
    <property type="project" value="UniProtKB-KW"/>
</dbReference>
<dbReference type="GO" id="GO:0009773">
    <property type="term" value="P:photosynthetic electron transport in photosystem I"/>
    <property type="evidence" value="ECO:0007669"/>
    <property type="project" value="InterPro"/>
</dbReference>
<dbReference type="FunFam" id="3.30.70.20:FF:000001">
    <property type="entry name" value="Photosystem I iron-sulfur center"/>
    <property type="match status" value="1"/>
</dbReference>
<dbReference type="Gene3D" id="3.30.70.20">
    <property type="match status" value="1"/>
</dbReference>
<dbReference type="HAMAP" id="MF_01303">
    <property type="entry name" value="PSI_PsaC"/>
    <property type="match status" value="1"/>
</dbReference>
<dbReference type="InterPro" id="IPR017896">
    <property type="entry name" value="4Fe4S_Fe-S-bd"/>
</dbReference>
<dbReference type="InterPro" id="IPR017900">
    <property type="entry name" value="4Fe4S_Fe_S_CS"/>
</dbReference>
<dbReference type="InterPro" id="IPR050157">
    <property type="entry name" value="PSI_iron-sulfur_center"/>
</dbReference>
<dbReference type="InterPro" id="IPR017491">
    <property type="entry name" value="PSI_PsaC"/>
</dbReference>
<dbReference type="NCBIfam" id="TIGR03048">
    <property type="entry name" value="PS_I_psaC"/>
    <property type="match status" value="1"/>
</dbReference>
<dbReference type="PANTHER" id="PTHR24960:SF79">
    <property type="entry name" value="PHOTOSYSTEM I IRON-SULFUR CENTER"/>
    <property type="match status" value="1"/>
</dbReference>
<dbReference type="PANTHER" id="PTHR24960">
    <property type="entry name" value="PHOTOSYSTEM I IRON-SULFUR CENTER-RELATED"/>
    <property type="match status" value="1"/>
</dbReference>
<dbReference type="Pfam" id="PF12838">
    <property type="entry name" value="Fer4_7"/>
    <property type="match status" value="1"/>
</dbReference>
<dbReference type="SUPFAM" id="SSF54862">
    <property type="entry name" value="4Fe-4S ferredoxins"/>
    <property type="match status" value="1"/>
</dbReference>
<dbReference type="PROSITE" id="PS00198">
    <property type="entry name" value="4FE4S_FER_1"/>
    <property type="match status" value="2"/>
</dbReference>
<dbReference type="PROSITE" id="PS51379">
    <property type="entry name" value="4FE4S_FER_2"/>
    <property type="match status" value="2"/>
</dbReference>
<organism>
    <name type="scientific">Synechococcus sp. (strain CC9605)</name>
    <dbReference type="NCBI Taxonomy" id="110662"/>
    <lineage>
        <taxon>Bacteria</taxon>
        <taxon>Bacillati</taxon>
        <taxon>Cyanobacteriota</taxon>
        <taxon>Cyanophyceae</taxon>
        <taxon>Synechococcales</taxon>
        <taxon>Synechococcaceae</taxon>
        <taxon>Synechococcus</taxon>
    </lineage>
</organism>
<accession>Q3ANC9</accession>
<sequence>MSHAVKIYDTCIGCTQCVRACPLDVLEMVPWDGCKAGQIASSPRTEDCVGCKRCETACPTDFLSIRVYLGDETTRSMGLAY</sequence>